<reference key="1">
    <citation type="journal article" date="2002" name="Proc. Natl. Acad. Sci. U.S.A.">
        <title>Genome sequence of Streptococcus mutans UA159, a cariogenic dental pathogen.</title>
        <authorList>
            <person name="Ajdic D.J."/>
            <person name="McShan W.M."/>
            <person name="McLaughlin R.E."/>
            <person name="Savic G."/>
            <person name="Chang J."/>
            <person name="Carson M.B."/>
            <person name="Primeaux C."/>
            <person name="Tian R."/>
            <person name="Kenton S."/>
            <person name="Jia H.G."/>
            <person name="Lin S.P."/>
            <person name="Qian Y."/>
            <person name="Li S."/>
            <person name="Zhu H."/>
            <person name="Najar F.Z."/>
            <person name="Lai H."/>
            <person name="White J."/>
            <person name="Roe B.A."/>
            <person name="Ferretti J.J."/>
        </authorList>
    </citation>
    <scope>NUCLEOTIDE SEQUENCE [LARGE SCALE GENOMIC DNA]</scope>
    <source>
        <strain>ATCC 700610 / UA159</strain>
    </source>
</reference>
<feature type="chain" id="PRO_0000130728" description="Large ribosomal subunit protein uL24">
    <location>
        <begin position="1"/>
        <end position="101"/>
    </location>
</feature>
<evidence type="ECO:0000255" key="1">
    <source>
        <dbReference type="HAMAP-Rule" id="MF_01326"/>
    </source>
</evidence>
<evidence type="ECO:0000305" key="2"/>
<gene>
    <name evidence="1" type="primary">rplX</name>
    <name type="synonym">rl24</name>
    <name type="ordered locus">SMU_2016</name>
</gene>
<accession>Q8DS24</accession>
<name>RL24_STRMU</name>
<organism>
    <name type="scientific">Streptococcus mutans serotype c (strain ATCC 700610 / UA159)</name>
    <dbReference type="NCBI Taxonomy" id="210007"/>
    <lineage>
        <taxon>Bacteria</taxon>
        <taxon>Bacillati</taxon>
        <taxon>Bacillota</taxon>
        <taxon>Bacilli</taxon>
        <taxon>Lactobacillales</taxon>
        <taxon>Streptococcaceae</taxon>
        <taxon>Streptococcus</taxon>
    </lineage>
</organism>
<dbReference type="EMBL" id="AE014133">
    <property type="protein sequence ID" value="AAN59619.1"/>
    <property type="molecule type" value="Genomic_DNA"/>
</dbReference>
<dbReference type="RefSeq" id="NP_722313.1">
    <property type="nucleotide sequence ID" value="NC_004350.2"/>
</dbReference>
<dbReference type="RefSeq" id="WP_002262329.1">
    <property type="nucleotide sequence ID" value="NC_004350.2"/>
</dbReference>
<dbReference type="SMR" id="Q8DS24"/>
<dbReference type="STRING" id="210007.SMU_2016"/>
<dbReference type="GeneID" id="93860218"/>
<dbReference type="KEGG" id="smu:SMU_2016"/>
<dbReference type="PATRIC" id="fig|210007.7.peg.1796"/>
<dbReference type="eggNOG" id="COG0198">
    <property type="taxonomic scope" value="Bacteria"/>
</dbReference>
<dbReference type="HOGENOM" id="CLU_093315_2_0_9"/>
<dbReference type="OrthoDB" id="9807419at2"/>
<dbReference type="PhylomeDB" id="Q8DS24"/>
<dbReference type="Proteomes" id="UP000002512">
    <property type="component" value="Chromosome"/>
</dbReference>
<dbReference type="GO" id="GO:1990904">
    <property type="term" value="C:ribonucleoprotein complex"/>
    <property type="evidence" value="ECO:0007669"/>
    <property type="project" value="UniProtKB-KW"/>
</dbReference>
<dbReference type="GO" id="GO:0005840">
    <property type="term" value="C:ribosome"/>
    <property type="evidence" value="ECO:0007669"/>
    <property type="project" value="UniProtKB-KW"/>
</dbReference>
<dbReference type="GO" id="GO:0019843">
    <property type="term" value="F:rRNA binding"/>
    <property type="evidence" value="ECO:0007669"/>
    <property type="project" value="UniProtKB-UniRule"/>
</dbReference>
<dbReference type="GO" id="GO:0003735">
    <property type="term" value="F:structural constituent of ribosome"/>
    <property type="evidence" value="ECO:0007669"/>
    <property type="project" value="InterPro"/>
</dbReference>
<dbReference type="GO" id="GO:0006412">
    <property type="term" value="P:translation"/>
    <property type="evidence" value="ECO:0007669"/>
    <property type="project" value="UniProtKB-UniRule"/>
</dbReference>
<dbReference type="CDD" id="cd06089">
    <property type="entry name" value="KOW_RPL26"/>
    <property type="match status" value="1"/>
</dbReference>
<dbReference type="FunFam" id="2.30.30.30:FF:000004">
    <property type="entry name" value="50S ribosomal protein L24"/>
    <property type="match status" value="1"/>
</dbReference>
<dbReference type="Gene3D" id="2.30.30.30">
    <property type="match status" value="1"/>
</dbReference>
<dbReference type="HAMAP" id="MF_01326_B">
    <property type="entry name" value="Ribosomal_uL24_B"/>
    <property type="match status" value="1"/>
</dbReference>
<dbReference type="InterPro" id="IPR005824">
    <property type="entry name" value="KOW"/>
</dbReference>
<dbReference type="InterPro" id="IPR014722">
    <property type="entry name" value="Rib_uL2_dom2"/>
</dbReference>
<dbReference type="InterPro" id="IPR003256">
    <property type="entry name" value="Ribosomal_uL24"/>
</dbReference>
<dbReference type="InterPro" id="IPR005825">
    <property type="entry name" value="Ribosomal_uL24_CS"/>
</dbReference>
<dbReference type="InterPro" id="IPR041988">
    <property type="entry name" value="Ribosomal_uL24_KOW"/>
</dbReference>
<dbReference type="InterPro" id="IPR008991">
    <property type="entry name" value="Translation_prot_SH3-like_sf"/>
</dbReference>
<dbReference type="NCBIfam" id="TIGR01079">
    <property type="entry name" value="rplX_bact"/>
    <property type="match status" value="1"/>
</dbReference>
<dbReference type="PANTHER" id="PTHR12903">
    <property type="entry name" value="MITOCHONDRIAL RIBOSOMAL PROTEIN L24"/>
    <property type="match status" value="1"/>
</dbReference>
<dbReference type="Pfam" id="PF00467">
    <property type="entry name" value="KOW"/>
    <property type="match status" value="1"/>
</dbReference>
<dbReference type="Pfam" id="PF17136">
    <property type="entry name" value="ribosomal_L24"/>
    <property type="match status" value="1"/>
</dbReference>
<dbReference type="SMART" id="SM00739">
    <property type="entry name" value="KOW"/>
    <property type="match status" value="1"/>
</dbReference>
<dbReference type="SUPFAM" id="SSF50104">
    <property type="entry name" value="Translation proteins SH3-like domain"/>
    <property type="match status" value="1"/>
</dbReference>
<dbReference type="PROSITE" id="PS01108">
    <property type="entry name" value="RIBOSOMAL_L24"/>
    <property type="match status" value="1"/>
</dbReference>
<comment type="function">
    <text evidence="1">One of two assembly initiator proteins, it binds directly to the 5'-end of the 23S rRNA, where it nucleates assembly of the 50S subunit.</text>
</comment>
<comment type="function">
    <text evidence="1">One of the proteins that surrounds the polypeptide exit tunnel on the outside of the subunit.</text>
</comment>
<comment type="subunit">
    <text evidence="1">Part of the 50S ribosomal subunit.</text>
</comment>
<comment type="similarity">
    <text evidence="1">Belongs to the universal ribosomal protein uL24 family.</text>
</comment>
<proteinExistence type="inferred from homology"/>
<protein>
    <recommendedName>
        <fullName evidence="1">Large ribosomal subunit protein uL24</fullName>
    </recommendedName>
    <alternativeName>
        <fullName evidence="2">50S ribosomal protein L24</fullName>
    </alternativeName>
</protein>
<keyword id="KW-1185">Reference proteome</keyword>
<keyword id="KW-0687">Ribonucleoprotein</keyword>
<keyword id="KW-0689">Ribosomal protein</keyword>
<keyword id="KW-0694">RNA-binding</keyword>
<keyword id="KW-0699">rRNA-binding</keyword>
<sequence>MFVKKGDKVRVIAGKDKGVEAVVLKAFPKINKVVVEGVAIVKKHQKPNNENPQGAIVEKEAPIHVSNVQVLDKNGVAGRVGYKVVDGKKVRYNKKSGEVLD</sequence>